<sequence>MTKLWTSLSALHSLAGPVVMLLYPLYASVIAIESPSKVDDEQWLAYWILYSFLTLSELILQSLLEWIPIWYTAKLVFVAWLVLPQFRGAAFIYNKVVREQFKKYGILKPKVEHQAE</sequence>
<keyword id="KW-0472">Membrane</keyword>
<keyword id="KW-1185">Reference proteome</keyword>
<keyword id="KW-0346">Stress response</keyword>
<keyword id="KW-0812">Transmembrane</keyword>
<keyword id="KW-1133">Transmembrane helix</keyword>
<proteinExistence type="evidence at transcript level"/>
<dbReference type="EMBL" id="AF290892">
    <property type="protein sequence ID" value="AAG02213.1"/>
    <property type="molecule type" value="mRNA"/>
</dbReference>
<dbReference type="EMBL" id="AF313484">
    <property type="protein sequence ID" value="AAG33060.1"/>
    <property type="molecule type" value="Genomic_DNA"/>
</dbReference>
<dbReference type="EMBL" id="AB023037">
    <property type="protein sequence ID" value="BAA96985.1"/>
    <property type="status" value="ALT_SEQ"/>
    <property type="molecule type" value="Genomic_DNA"/>
</dbReference>
<dbReference type="EMBL" id="CP002688">
    <property type="protein sequence ID" value="AED95983.1"/>
    <property type="molecule type" value="Genomic_DNA"/>
</dbReference>
<dbReference type="EMBL" id="AY084933">
    <property type="protein sequence ID" value="AAM61494.1"/>
    <property type="molecule type" value="mRNA"/>
</dbReference>
<dbReference type="RefSeq" id="NP_568744.1">
    <property type="nucleotide sequence ID" value="NM_124450.5"/>
</dbReference>
<dbReference type="FunCoup" id="Q9FED2">
    <property type="interactions" value="353"/>
</dbReference>
<dbReference type="STRING" id="3702.Q9FED2"/>
<dbReference type="PaxDb" id="3702-AT5G50720.1"/>
<dbReference type="EnsemblPlants" id="AT5G50720.1">
    <property type="protein sequence ID" value="AT5G50720.1"/>
    <property type="gene ID" value="AT5G50720"/>
</dbReference>
<dbReference type="GeneID" id="835144"/>
<dbReference type="Gramene" id="AT5G50720.1">
    <property type="protein sequence ID" value="AT5G50720.1"/>
    <property type="gene ID" value="AT5G50720"/>
</dbReference>
<dbReference type="KEGG" id="ath:AT5G50720"/>
<dbReference type="Araport" id="AT5G50720"/>
<dbReference type="TAIR" id="AT5G50720">
    <property type="gene designation" value="HVA22E"/>
</dbReference>
<dbReference type="eggNOG" id="KOG1725">
    <property type="taxonomic scope" value="Eukaryota"/>
</dbReference>
<dbReference type="HOGENOM" id="CLU_098452_1_0_1"/>
<dbReference type="InParanoid" id="Q9FED2"/>
<dbReference type="OMA" id="KPKVEHQ"/>
<dbReference type="OrthoDB" id="10009287at2759"/>
<dbReference type="PhylomeDB" id="Q9FED2"/>
<dbReference type="PRO" id="PR:Q9FED2"/>
<dbReference type="Proteomes" id="UP000006548">
    <property type="component" value="Chromosome 5"/>
</dbReference>
<dbReference type="ExpressionAtlas" id="Q9FED2">
    <property type="expression patterns" value="baseline and differential"/>
</dbReference>
<dbReference type="GO" id="GO:0016020">
    <property type="term" value="C:membrane"/>
    <property type="evidence" value="ECO:0007669"/>
    <property type="project" value="UniProtKB-SubCell"/>
</dbReference>
<dbReference type="GO" id="GO:0042538">
    <property type="term" value="P:hyperosmotic salinity response"/>
    <property type="evidence" value="ECO:0000270"/>
    <property type="project" value="TAIR"/>
</dbReference>
<dbReference type="GO" id="GO:0009737">
    <property type="term" value="P:response to abscisic acid"/>
    <property type="evidence" value="ECO:0000270"/>
    <property type="project" value="TAIR"/>
</dbReference>
<dbReference type="GO" id="GO:0009409">
    <property type="term" value="P:response to cold"/>
    <property type="evidence" value="ECO:0000270"/>
    <property type="project" value="TAIR"/>
</dbReference>
<dbReference type="GO" id="GO:0009414">
    <property type="term" value="P:response to water deprivation"/>
    <property type="evidence" value="ECO:0000270"/>
    <property type="project" value="TAIR"/>
</dbReference>
<dbReference type="InterPro" id="IPR004345">
    <property type="entry name" value="TB2_DP1_HVA22"/>
</dbReference>
<dbReference type="PANTHER" id="PTHR12300:SF139">
    <property type="entry name" value="HVA22-LIKE PROTEIN E"/>
    <property type="match status" value="1"/>
</dbReference>
<dbReference type="PANTHER" id="PTHR12300">
    <property type="entry name" value="HVA22-LIKE PROTEINS"/>
    <property type="match status" value="1"/>
</dbReference>
<dbReference type="Pfam" id="PF03134">
    <property type="entry name" value="TB2_DP1_HVA22"/>
    <property type="match status" value="1"/>
</dbReference>
<reference key="1">
    <citation type="journal article" date="2002" name="Plant Mol. Biol.">
        <title>AtHVA22 gene family in Arabidopsis: phylogenetic relationship, ABA and stress regulation, and tissue-specific expression.</title>
        <authorList>
            <person name="Chen C.-N."/>
            <person name="Chu C.-C."/>
            <person name="Zentella R."/>
            <person name="Pan S.-M."/>
            <person name="Ho T.-H.D."/>
        </authorList>
    </citation>
    <scope>NUCLEOTIDE SEQUENCE [GENOMIC DNA / MRNA]</scope>
    <scope>TISSUE SPECIFICITY</scope>
    <scope>INDUCTION</scope>
</reference>
<reference key="2">
    <citation type="journal article" date="2000" name="DNA Res.">
        <title>Structural analysis of Arabidopsis thaliana chromosome 5. X. Sequence features of the regions of 3,076,755 bp covered by sixty P1 and TAC clones.</title>
        <authorList>
            <person name="Sato S."/>
            <person name="Nakamura Y."/>
            <person name="Kaneko T."/>
            <person name="Katoh T."/>
            <person name="Asamizu E."/>
            <person name="Kotani H."/>
            <person name="Tabata S."/>
        </authorList>
    </citation>
    <scope>NUCLEOTIDE SEQUENCE [LARGE SCALE GENOMIC DNA]</scope>
    <source>
        <strain>cv. Columbia</strain>
    </source>
</reference>
<reference key="3">
    <citation type="journal article" date="2017" name="Plant J.">
        <title>Araport11: a complete reannotation of the Arabidopsis thaliana reference genome.</title>
        <authorList>
            <person name="Cheng C.Y."/>
            <person name="Krishnakumar V."/>
            <person name="Chan A.P."/>
            <person name="Thibaud-Nissen F."/>
            <person name="Schobel S."/>
            <person name="Town C.D."/>
        </authorList>
    </citation>
    <scope>GENOME REANNOTATION</scope>
    <source>
        <strain>cv. Columbia</strain>
    </source>
</reference>
<reference key="4">
    <citation type="submission" date="2002-03" db="EMBL/GenBank/DDBJ databases">
        <title>Full-length cDNA from Arabidopsis thaliana.</title>
        <authorList>
            <person name="Brover V.V."/>
            <person name="Troukhan M.E."/>
            <person name="Alexandrov N.A."/>
            <person name="Lu Y.-P."/>
            <person name="Flavell R.B."/>
            <person name="Feldmann K.A."/>
        </authorList>
    </citation>
    <scope>NUCLEOTIDE SEQUENCE [LARGE SCALE MRNA]</scope>
</reference>
<feature type="chain" id="PRO_0000101839" description="HVA22-like protein e">
    <location>
        <begin position="1"/>
        <end position="116"/>
    </location>
</feature>
<feature type="transmembrane region" description="Helical" evidence="1">
    <location>
        <begin position="12"/>
        <end position="32"/>
    </location>
</feature>
<feature type="transmembrane region" description="Helical" evidence="1">
    <location>
        <begin position="42"/>
        <end position="62"/>
    </location>
</feature>
<feature type="transmembrane region" description="Helical" evidence="1">
    <location>
        <begin position="63"/>
        <end position="83"/>
    </location>
</feature>
<protein>
    <recommendedName>
        <fullName>HVA22-like protein e</fullName>
        <shortName>AtHVA22e</shortName>
    </recommendedName>
</protein>
<organism>
    <name type="scientific">Arabidopsis thaliana</name>
    <name type="common">Mouse-ear cress</name>
    <dbReference type="NCBI Taxonomy" id="3702"/>
    <lineage>
        <taxon>Eukaryota</taxon>
        <taxon>Viridiplantae</taxon>
        <taxon>Streptophyta</taxon>
        <taxon>Embryophyta</taxon>
        <taxon>Tracheophyta</taxon>
        <taxon>Spermatophyta</taxon>
        <taxon>Magnoliopsida</taxon>
        <taxon>eudicotyledons</taxon>
        <taxon>Gunneridae</taxon>
        <taxon>Pentapetalae</taxon>
        <taxon>rosids</taxon>
        <taxon>malvids</taxon>
        <taxon>Brassicales</taxon>
        <taxon>Brassicaceae</taxon>
        <taxon>Camelineae</taxon>
        <taxon>Arabidopsis</taxon>
    </lineage>
</organism>
<name>HA22E_ARATH</name>
<evidence type="ECO:0000255" key="1"/>
<evidence type="ECO:0000269" key="2">
    <source>
    </source>
</evidence>
<evidence type="ECO:0000305" key="3"/>
<gene>
    <name type="primary">HVA22E</name>
    <name type="ordered locus">At5g50720</name>
    <name type="ORF">MFB16.12</name>
</gene>
<accession>Q9FED2</accession>
<accession>Q9LUE9</accession>
<comment type="subcellular location">
    <subcellularLocation>
        <location evidence="3">Membrane</location>
        <topology evidence="3">Multi-pass membrane protein</topology>
    </subcellularLocation>
</comment>
<comment type="tissue specificity">
    <text evidence="2">Predominantly expressed in stem.</text>
</comment>
<comment type="induction">
    <text evidence="2">By abscisic acid (ABA), cold, drought and salt stresses.</text>
</comment>
<comment type="similarity">
    <text evidence="3">Belongs to the DP1 family.</text>
</comment>
<comment type="sequence caution" evidence="3">
    <conflict type="erroneous gene model prediction">
        <sequence resource="EMBL-CDS" id="BAA96985"/>
    </conflict>
</comment>